<evidence type="ECO:0000255" key="1">
    <source>
        <dbReference type="HAMAP-Rule" id="MF_00429"/>
    </source>
</evidence>
<comment type="function">
    <text evidence="1">NQR complex catalyzes the reduction of ubiquinone-1 to ubiquinol by two successive reactions, coupled with the transport of Na(+) ions from the cytoplasm to the periplasm. NqrA to NqrE are probably involved in the second step, the conversion of ubisemiquinone to ubiquinol.</text>
</comment>
<comment type="catalytic activity">
    <reaction evidence="1">
        <text>a ubiquinone + n Na(+)(in) + NADH + H(+) = a ubiquinol + n Na(+)(out) + NAD(+)</text>
        <dbReference type="Rhea" id="RHEA:47748"/>
        <dbReference type="Rhea" id="RHEA-COMP:9565"/>
        <dbReference type="Rhea" id="RHEA-COMP:9566"/>
        <dbReference type="ChEBI" id="CHEBI:15378"/>
        <dbReference type="ChEBI" id="CHEBI:16389"/>
        <dbReference type="ChEBI" id="CHEBI:17976"/>
        <dbReference type="ChEBI" id="CHEBI:29101"/>
        <dbReference type="ChEBI" id="CHEBI:57540"/>
        <dbReference type="ChEBI" id="CHEBI:57945"/>
        <dbReference type="EC" id="7.2.1.1"/>
    </reaction>
</comment>
<comment type="subunit">
    <text evidence="1">Composed of six subunits; NqrA, NqrB, NqrC, NqrD, NqrE and NqrF.</text>
</comment>
<comment type="subcellular location">
    <subcellularLocation>
        <location evidence="1">Cell inner membrane</location>
        <topology evidence="1">Multi-pass membrane protein</topology>
    </subcellularLocation>
</comment>
<comment type="similarity">
    <text evidence="1">Belongs to the NqrDE/RnfAE family.</text>
</comment>
<protein>
    <recommendedName>
        <fullName evidence="1">Na(+)-translocating NADH-quinone reductase subunit E</fullName>
        <shortName evidence="1">Na(+)-NQR subunit E</shortName>
        <shortName evidence="1">Na(+)-translocating NQR subunit E</shortName>
        <ecNumber evidence="1">7.2.1.1</ecNumber>
    </recommendedName>
    <alternativeName>
        <fullName evidence="1">NQR complex subunit E</fullName>
    </alternativeName>
    <alternativeName>
        <fullName evidence="1">NQR-1 subunit E</fullName>
    </alternativeName>
</protein>
<reference key="1">
    <citation type="journal article" date="2005" name="Nucleic Acids Res.">
        <title>Genomic blueprint of Hahella chejuensis, a marine microbe producing an algicidal agent.</title>
        <authorList>
            <person name="Jeong H."/>
            <person name="Yim J.H."/>
            <person name="Lee C."/>
            <person name="Choi S.-H."/>
            <person name="Park Y.K."/>
            <person name="Yoon S.H."/>
            <person name="Hur C.-G."/>
            <person name="Kang H.-Y."/>
            <person name="Kim D."/>
            <person name="Lee H.H."/>
            <person name="Park K.H."/>
            <person name="Park S.-H."/>
            <person name="Park H.-S."/>
            <person name="Lee H.K."/>
            <person name="Oh T.K."/>
            <person name="Kim J.F."/>
        </authorList>
    </citation>
    <scope>NUCLEOTIDE SEQUENCE [LARGE SCALE GENOMIC DNA]</scope>
    <source>
        <strain>KCTC 2396</strain>
    </source>
</reference>
<proteinExistence type="inferred from homology"/>
<name>NQRE_HAHCH</name>
<feature type="chain" id="PRO_1000060195" description="Na(+)-translocating NADH-quinone reductase subunit E">
    <location>
        <begin position="1"/>
        <end position="203"/>
    </location>
</feature>
<feature type="transmembrane region" description="Helical" evidence="1">
    <location>
        <begin position="12"/>
        <end position="32"/>
    </location>
</feature>
<feature type="transmembrane region" description="Helical" evidence="1">
    <location>
        <begin position="36"/>
        <end position="56"/>
    </location>
</feature>
<feature type="transmembrane region" description="Helical" evidence="1">
    <location>
        <begin position="82"/>
        <end position="102"/>
    </location>
</feature>
<feature type="transmembrane region" description="Helical" evidence="1">
    <location>
        <begin position="115"/>
        <end position="135"/>
    </location>
</feature>
<feature type="transmembrane region" description="Helical" evidence="1">
    <location>
        <begin position="145"/>
        <end position="165"/>
    </location>
</feature>
<feature type="transmembrane region" description="Helical" evidence="1">
    <location>
        <begin position="181"/>
        <end position="201"/>
    </location>
</feature>
<organism>
    <name type="scientific">Hahella chejuensis (strain KCTC 2396)</name>
    <dbReference type="NCBI Taxonomy" id="349521"/>
    <lineage>
        <taxon>Bacteria</taxon>
        <taxon>Pseudomonadati</taxon>
        <taxon>Pseudomonadota</taxon>
        <taxon>Gammaproteobacteria</taxon>
        <taxon>Oceanospirillales</taxon>
        <taxon>Hahellaceae</taxon>
        <taxon>Hahella</taxon>
    </lineage>
</organism>
<accession>Q2SIP7</accession>
<sequence length="203" mass="21735">MFEHYLSLLIKAVFVENMALAFFLGMCTFLALSKKMEAAIGLGIAVVVVLSVTVPVNNAIYNGLLREGALSWAGLPNVDLSFLGLLTYIGVIAAIVQILEMVLDKFFPALYNALGVFLPLITVNCAIMGASLFMVERDYTFGESLVYGFGAGLGWALAIIALAGIREKLKYSDVPEGLRGLGITFITVGLMSLGFMSFSGISL</sequence>
<keyword id="KW-0997">Cell inner membrane</keyword>
<keyword id="KW-1003">Cell membrane</keyword>
<keyword id="KW-0406">Ion transport</keyword>
<keyword id="KW-0472">Membrane</keyword>
<keyword id="KW-0520">NAD</keyword>
<keyword id="KW-1185">Reference proteome</keyword>
<keyword id="KW-0915">Sodium</keyword>
<keyword id="KW-0739">Sodium transport</keyword>
<keyword id="KW-1278">Translocase</keyword>
<keyword id="KW-0812">Transmembrane</keyword>
<keyword id="KW-1133">Transmembrane helix</keyword>
<keyword id="KW-0813">Transport</keyword>
<keyword id="KW-0830">Ubiquinone</keyword>
<gene>
    <name evidence="1" type="primary">nqrE</name>
    <name type="ordered locus">HCH_02689</name>
</gene>
<dbReference type="EC" id="7.2.1.1" evidence="1"/>
<dbReference type="EMBL" id="CP000155">
    <property type="protein sequence ID" value="ABC29477.1"/>
    <property type="molecule type" value="Genomic_DNA"/>
</dbReference>
<dbReference type="RefSeq" id="WP_011396546.1">
    <property type="nucleotide sequence ID" value="NC_007645.1"/>
</dbReference>
<dbReference type="SMR" id="Q2SIP7"/>
<dbReference type="STRING" id="349521.HCH_02689"/>
<dbReference type="KEGG" id="hch:HCH_02689"/>
<dbReference type="eggNOG" id="COG2209">
    <property type="taxonomic scope" value="Bacteria"/>
</dbReference>
<dbReference type="HOGENOM" id="CLU_095255_0_0_6"/>
<dbReference type="OrthoDB" id="9803631at2"/>
<dbReference type="Proteomes" id="UP000000238">
    <property type="component" value="Chromosome"/>
</dbReference>
<dbReference type="GO" id="GO:0009276">
    <property type="term" value="C:Gram-negative-bacterium-type cell wall"/>
    <property type="evidence" value="ECO:0007669"/>
    <property type="project" value="InterPro"/>
</dbReference>
<dbReference type="GO" id="GO:0005886">
    <property type="term" value="C:plasma membrane"/>
    <property type="evidence" value="ECO:0007669"/>
    <property type="project" value="UniProtKB-SubCell"/>
</dbReference>
<dbReference type="GO" id="GO:0016655">
    <property type="term" value="F:oxidoreductase activity, acting on NAD(P)H, quinone or similar compound as acceptor"/>
    <property type="evidence" value="ECO:0007669"/>
    <property type="project" value="UniProtKB-UniRule"/>
</dbReference>
<dbReference type="GO" id="GO:0022904">
    <property type="term" value="P:respiratory electron transport chain"/>
    <property type="evidence" value="ECO:0007669"/>
    <property type="project" value="InterPro"/>
</dbReference>
<dbReference type="GO" id="GO:0006814">
    <property type="term" value="P:sodium ion transport"/>
    <property type="evidence" value="ECO:0007669"/>
    <property type="project" value="UniProtKB-UniRule"/>
</dbReference>
<dbReference type="HAMAP" id="MF_00429">
    <property type="entry name" value="NqrE"/>
    <property type="match status" value="1"/>
</dbReference>
<dbReference type="InterPro" id="IPR003667">
    <property type="entry name" value="NqrDE/RnfAE"/>
</dbReference>
<dbReference type="InterPro" id="IPR050133">
    <property type="entry name" value="NqrDE/RnfAE_oxidrdctase"/>
</dbReference>
<dbReference type="InterPro" id="IPR010967">
    <property type="entry name" value="NqrE"/>
</dbReference>
<dbReference type="NCBIfam" id="TIGR01940">
    <property type="entry name" value="nqrE"/>
    <property type="match status" value="1"/>
</dbReference>
<dbReference type="PANTHER" id="PTHR30335">
    <property type="entry name" value="INTEGRAL MEMBRANE PROTEIN OF SOXR-REDUCING COMPLEX"/>
    <property type="match status" value="1"/>
</dbReference>
<dbReference type="PANTHER" id="PTHR30335:SF1">
    <property type="entry name" value="NA(+)-TRANSLOCATING NADH-QUINONE REDUCTASE SUBUNIT E"/>
    <property type="match status" value="1"/>
</dbReference>
<dbReference type="Pfam" id="PF02508">
    <property type="entry name" value="Rnf-Nqr"/>
    <property type="match status" value="1"/>
</dbReference>
<dbReference type="PIRSF" id="PIRSF006102">
    <property type="entry name" value="NQR_DE"/>
    <property type="match status" value="1"/>
</dbReference>